<name>GLMU_BURA4</name>
<proteinExistence type="inferred from homology"/>
<comment type="function">
    <text evidence="1">Catalyzes the last two sequential reactions in the de novo biosynthetic pathway for UDP-N-acetylglucosamine (UDP-GlcNAc). The C-terminal domain catalyzes the transfer of acetyl group from acetyl coenzyme A to glucosamine-1-phosphate (GlcN-1-P) to produce N-acetylglucosamine-1-phosphate (GlcNAc-1-P), which is converted into UDP-GlcNAc by the transfer of uridine 5-monophosphate (from uridine 5-triphosphate), a reaction catalyzed by the N-terminal domain.</text>
</comment>
<comment type="catalytic activity">
    <reaction evidence="1">
        <text>alpha-D-glucosamine 1-phosphate + acetyl-CoA = N-acetyl-alpha-D-glucosamine 1-phosphate + CoA + H(+)</text>
        <dbReference type="Rhea" id="RHEA:13725"/>
        <dbReference type="ChEBI" id="CHEBI:15378"/>
        <dbReference type="ChEBI" id="CHEBI:57287"/>
        <dbReference type="ChEBI" id="CHEBI:57288"/>
        <dbReference type="ChEBI" id="CHEBI:57776"/>
        <dbReference type="ChEBI" id="CHEBI:58516"/>
        <dbReference type="EC" id="2.3.1.157"/>
    </reaction>
</comment>
<comment type="catalytic activity">
    <reaction evidence="1">
        <text>N-acetyl-alpha-D-glucosamine 1-phosphate + UTP + H(+) = UDP-N-acetyl-alpha-D-glucosamine + diphosphate</text>
        <dbReference type="Rhea" id="RHEA:13509"/>
        <dbReference type="ChEBI" id="CHEBI:15378"/>
        <dbReference type="ChEBI" id="CHEBI:33019"/>
        <dbReference type="ChEBI" id="CHEBI:46398"/>
        <dbReference type="ChEBI" id="CHEBI:57705"/>
        <dbReference type="ChEBI" id="CHEBI:57776"/>
        <dbReference type="EC" id="2.7.7.23"/>
    </reaction>
</comment>
<comment type="cofactor">
    <cofactor evidence="1">
        <name>Mg(2+)</name>
        <dbReference type="ChEBI" id="CHEBI:18420"/>
    </cofactor>
    <text evidence="1">Binds 1 Mg(2+) ion per subunit.</text>
</comment>
<comment type="pathway">
    <text evidence="1">Nucleotide-sugar biosynthesis; UDP-N-acetyl-alpha-D-glucosamine biosynthesis; N-acetyl-alpha-D-glucosamine 1-phosphate from alpha-D-glucosamine 6-phosphate (route II): step 2/2.</text>
</comment>
<comment type="pathway">
    <text evidence="1">Nucleotide-sugar biosynthesis; UDP-N-acetyl-alpha-D-glucosamine biosynthesis; UDP-N-acetyl-alpha-D-glucosamine from N-acetyl-alpha-D-glucosamine 1-phosphate: step 1/1.</text>
</comment>
<comment type="pathway">
    <text evidence="1">Bacterial outer membrane biogenesis; LPS lipid A biosynthesis.</text>
</comment>
<comment type="subunit">
    <text evidence="1">Homotrimer.</text>
</comment>
<comment type="subcellular location">
    <subcellularLocation>
        <location evidence="1">Cytoplasm</location>
    </subcellularLocation>
</comment>
<comment type="similarity">
    <text evidence="1">In the N-terminal section; belongs to the N-acetylglucosamine-1-phosphate uridyltransferase family.</text>
</comment>
<comment type="similarity">
    <text evidence="1">In the C-terminal section; belongs to the transferase hexapeptide repeat family.</text>
</comment>
<sequence>MNIVILAAGTGKRMRSALPKVLHPLAGRPLLSHVIATARTLQPSRLVVVVGHGAEQVQTAVAAPDVQFAVQAEQLGTGHAVRQALPLLDPAQPTLVLYGDVPLTRASTLRRLVDAAREGSYGILTVTLDDPTGYGRIVRDAAGFVTRIVEQKDASPEQLKIAEINTGIIVTPTGQLAMWLGALKNENAQGEYYLTDVVELAIEAGFDVVTSQPDDEWETLGVNSKAQLAELERIHQRTIADALLVDGVTLADPARVDVRGTLRCGRDVSIDVNCVFEGNVTLADNVTIGPNCVIRNASVGAGTRIDAFTHIDGAELGANTVIGPYARLRPGAQLADEAHVGNFVEVKNAVIGHGSKANHLTYIGDADIGARVNIGAGTITCNYDGANKFRTVIEDDVFVGSDTQLVAPVRVGRGVTIAAGTTIWKDVAEGVLALNEKTQTAKSGYVRPVKKKS</sequence>
<protein>
    <recommendedName>
        <fullName evidence="1">Bifunctional protein GlmU</fullName>
    </recommendedName>
    <domain>
        <recommendedName>
            <fullName evidence="1">UDP-N-acetylglucosamine pyrophosphorylase</fullName>
            <ecNumber evidence="1">2.7.7.23</ecNumber>
        </recommendedName>
        <alternativeName>
            <fullName evidence="1">N-acetylglucosamine-1-phosphate uridyltransferase</fullName>
        </alternativeName>
    </domain>
    <domain>
        <recommendedName>
            <fullName evidence="1">Glucosamine-1-phosphate N-acetyltransferase</fullName>
            <ecNumber evidence="1">2.3.1.157</ecNumber>
        </recommendedName>
    </domain>
</protein>
<keyword id="KW-0012">Acyltransferase</keyword>
<keyword id="KW-0133">Cell shape</keyword>
<keyword id="KW-0961">Cell wall biogenesis/degradation</keyword>
<keyword id="KW-0963">Cytoplasm</keyword>
<keyword id="KW-0460">Magnesium</keyword>
<keyword id="KW-0479">Metal-binding</keyword>
<keyword id="KW-0511">Multifunctional enzyme</keyword>
<keyword id="KW-0548">Nucleotidyltransferase</keyword>
<keyword id="KW-0573">Peptidoglycan synthesis</keyword>
<keyword id="KW-0677">Repeat</keyword>
<keyword id="KW-0808">Transferase</keyword>
<organism>
    <name type="scientific">Burkholderia ambifaria (strain MC40-6)</name>
    <dbReference type="NCBI Taxonomy" id="398577"/>
    <lineage>
        <taxon>Bacteria</taxon>
        <taxon>Pseudomonadati</taxon>
        <taxon>Pseudomonadota</taxon>
        <taxon>Betaproteobacteria</taxon>
        <taxon>Burkholderiales</taxon>
        <taxon>Burkholderiaceae</taxon>
        <taxon>Burkholderia</taxon>
        <taxon>Burkholderia cepacia complex</taxon>
    </lineage>
</organism>
<reference key="1">
    <citation type="submission" date="2008-04" db="EMBL/GenBank/DDBJ databases">
        <title>Complete sequence of chromosome 1 of Burkholderia ambifaria MC40-6.</title>
        <authorList>
            <person name="Copeland A."/>
            <person name="Lucas S."/>
            <person name="Lapidus A."/>
            <person name="Glavina del Rio T."/>
            <person name="Dalin E."/>
            <person name="Tice H."/>
            <person name="Pitluck S."/>
            <person name="Chain P."/>
            <person name="Malfatti S."/>
            <person name="Shin M."/>
            <person name="Vergez L."/>
            <person name="Lang D."/>
            <person name="Schmutz J."/>
            <person name="Larimer F."/>
            <person name="Land M."/>
            <person name="Hauser L."/>
            <person name="Kyrpides N."/>
            <person name="Lykidis A."/>
            <person name="Ramette A."/>
            <person name="Konstantinidis K."/>
            <person name="Tiedje J."/>
            <person name="Richardson P."/>
        </authorList>
    </citation>
    <scope>NUCLEOTIDE SEQUENCE [LARGE SCALE GENOMIC DNA]</scope>
    <source>
        <strain>MC40-6</strain>
    </source>
</reference>
<feature type="chain" id="PRO_1000186414" description="Bifunctional protein GlmU">
    <location>
        <begin position="1"/>
        <end position="453"/>
    </location>
</feature>
<feature type="region of interest" description="Pyrophosphorylase" evidence="1">
    <location>
        <begin position="1"/>
        <end position="225"/>
    </location>
</feature>
<feature type="region of interest" description="Linker" evidence="1">
    <location>
        <begin position="226"/>
        <end position="246"/>
    </location>
</feature>
<feature type="region of interest" description="N-acetyltransferase" evidence="1">
    <location>
        <begin position="247"/>
        <end position="453"/>
    </location>
</feature>
<feature type="active site" description="Proton acceptor" evidence="1">
    <location>
        <position position="359"/>
    </location>
</feature>
<feature type="binding site" evidence="1">
    <location>
        <begin position="6"/>
        <end position="9"/>
    </location>
    <ligand>
        <name>UDP-N-acetyl-alpha-D-glucosamine</name>
        <dbReference type="ChEBI" id="CHEBI:57705"/>
    </ligand>
</feature>
<feature type="binding site" evidence="1">
    <location>
        <position position="20"/>
    </location>
    <ligand>
        <name>UDP-N-acetyl-alpha-D-glucosamine</name>
        <dbReference type="ChEBI" id="CHEBI:57705"/>
    </ligand>
</feature>
<feature type="binding site" evidence="1">
    <location>
        <position position="71"/>
    </location>
    <ligand>
        <name>UDP-N-acetyl-alpha-D-glucosamine</name>
        <dbReference type="ChEBI" id="CHEBI:57705"/>
    </ligand>
</feature>
<feature type="binding site" evidence="1">
    <location>
        <begin position="76"/>
        <end position="77"/>
    </location>
    <ligand>
        <name>UDP-N-acetyl-alpha-D-glucosamine</name>
        <dbReference type="ChEBI" id="CHEBI:57705"/>
    </ligand>
</feature>
<feature type="binding site" evidence="1">
    <location>
        <begin position="98"/>
        <end position="100"/>
    </location>
    <ligand>
        <name>UDP-N-acetyl-alpha-D-glucosamine</name>
        <dbReference type="ChEBI" id="CHEBI:57705"/>
    </ligand>
</feature>
<feature type="binding site" evidence="1">
    <location>
        <position position="100"/>
    </location>
    <ligand>
        <name>Mg(2+)</name>
        <dbReference type="ChEBI" id="CHEBI:18420"/>
    </ligand>
</feature>
<feature type="binding site" evidence="1">
    <location>
        <position position="135"/>
    </location>
    <ligand>
        <name>UDP-N-acetyl-alpha-D-glucosamine</name>
        <dbReference type="ChEBI" id="CHEBI:57705"/>
    </ligand>
</feature>
<feature type="binding site" evidence="1">
    <location>
        <position position="150"/>
    </location>
    <ligand>
        <name>UDP-N-acetyl-alpha-D-glucosamine</name>
        <dbReference type="ChEBI" id="CHEBI:57705"/>
    </ligand>
</feature>
<feature type="binding site" evidence="1">
    <location>
        <position position="165"/>
    </location>
    <ligand>
        <name>UDP-N-acetyl-alpha-D-glucosamine</name>
        <dbReference type="ChEBI" id="CHEBI:57705"/>
    </ligand>
</feature>
<feature type="binding site" evidence="1">
    <location>
        <position position="223"/>
    </location>
    <ligand>
        <name>Mg(2+)</name>
        <dbReference type="ChEBI" id="CHEBI:18420"/>
    </ligand>
</feature>
<feature type="binding site" evidence="1">
    <location>
        <position position="223"/>
    </location>
    <ligand>
        <name>UDP-N-acetyl-alpha-D-glucosamine</name>
        <dbReference type="ChEBI" id="CHEBI:57705"/>
    </ligand>
</feature>
<feature type="binding site" evidence="1">
    <location>
        <position position="329"/>
    </location>
    <ligand>
        <name>UDP-N-acetyl-alpha-D-glucosamine</name>
        <dbReference type="ChEBI" id="CHEBI:57705"/>
    </ligand>
</feature>
<feature type="binding site" evidence="1">
    <location>
        <position position="347"/>
    </location>
    <ligand>
        <name>UDP-N-acetyl-alpha-D-glucosamine</name>
        <dbReference type="ChEBI" id="CHEBI:57705"/>
    </ligand>
</feature>
<feature type="binding site" evidence="1">
    <location>
        <position position="362"/>
    </location>
    <ligand>
        <name>UDP-N-acetyl-alpha-D-glucosamine</name>
        <dbReference type="ChEBI" id="CHEBI:57705"/>
    </ligand>
</feature>
<feature type="binding site" evidence="1">
    <location>
        <position position="373"/>
    </location>
    <ligand>
        <name>UDP-N-acetyl-alpha-D-glucosamine</name>
        <dbReference type="ChEBI" id="CHEBI:57705"/>
    </ligand>
</feature>
<feature type="binding site" evidence="1">
    <location>
        <position position="376"/>
    </location>
    <ligand>
        <name>acetyl-CoA</name>
        <dbReference type="ChEBI" id="CHEBI:57288"/>
    </ligand>
</feature>
<feature type="binding site" evidence="1">
    <location>
        <begin position="382"/>
        <end position="383"/>
    </location>
    <ligand>
        <name>acetyl-CoA</name>
        <dbReference type="ChEBI" id="CHEBI:57288"/>
    </ligand>
</feature>
<feature type="binding site" evidence="1">
    <location>
        <position position="401"/>
    </location>
    <ligand>
        <name>acetyl-CoA</name>
        <dbReference type="ChEBI" id="CHEBI:57288"/>
    </ligand>
</feature>
<feature type="binding site" evidence="1">
    <location>
        <position position="419"/>
    </location>
    <ligand>
        <name>acetyl-CoA</name>
        <dbReference type="ChEBI" id="CHEBI:57288"/>
    </ligand>
</feature>
<dbReference type="EC" id="2.7.7.23" evidence="1"/>
<dbReference type="EC" id="2.3.1.157" evidence="1"/>
<dbReference type="EMBL" id="CP001025">
    <property type="protein sequence ID" value="ACB65367.1"/>
    <property type="molecule type" value="Genomic_DNA"/>
</dbReference>
<dbReference type="RefSeq" id="WP_012364869.1">
    <property type="nucleotide sequence ID" value="NC_010551.1"/>
</dbReference>
<dbReference type="SMR" id="B1YP62"/>
<dbReference type="KEGG" id="bac:BamMC406_2891"/>
<dbReference type="HOGENOM" id="CLU_029499_15_2_4"/>
<dbReference type="OrthoDB" id="9775031at2"/>
<dbReference type="UniPathway" id="UPA00113">
    <property type="reaction ID" value="UER00532"/>
</dbReference>
<dbReference type="UniPathway" id="UPA00113">
    <property type="reaction ID" value="UER00533"/>
</dbReference>
<dbReference type="UniPathway" id="UPA00973"/>
<dbReference type="Proteomes" id="UP000001680">
    <property type="component" value="Chromosome 1"/>
</dbReference>
<dbReference type="GO" id="GO:0005737">
    <property type="term" value="C:cytoplasm"/>
    <property type="evidence" value="ECO:0007669"/>
    <property type="project" value="UniProtKB-SubCell"/>
</dbReference>
<dbReference type="GO" id="GO:0016020">
    <property type="term" value="C:membrane"/>
    <property type="evidence" value="ECO:0007669"/>
    <property type="project" value="GOC"/>
</dbReference>
<dbReference type="GO" id="GO:0019134">
    <property type="term" value="F:glucosamine-1-phosphate N-acetyltransferase activity"/>
    <property type="evidence" value="ECO:0007669"/>
    <property type="project" value="UniProtKB-UniRule"/>
</dbReference>
<dbReference type="GO" id="GO:0000287">
    <property type="term" value="F:magnesium ion binding"/>
    <property type="evidence" value="ECO:0007669"/>
    <property type="project" value="UniProtKB-UniRule"/>
</dbReference>
<dbReference type="GO" id="GO:0003977">
    <property type="term" value="F:UDP-N-acetylglucosamine diphosphorylase activity"/>
    <property type="evidence" value="ECO:0007669"/>
    <property type="project" value="UniProtKB-UniRule"/>
</dbReference>
<dbReference type="GO" id="GO:0000902">
    <property type="term" value="P:cell morphogenesis"/>
    <property type="evidence" value="ECO:0007669"/>
    <property type="project" value="UniProtKB-UniRule"/>
</dbReference>
<dbReference type="GO" id="GO:0071555">
    <property type="term" value="P:cell wall organization"/>
    <property type="evidence" value="ECO:0007669"/>
    <property type="project" value="UniProtKB-KW"/>
</dbReference>
<dbReference type="GO" id="GO:0009245">
    <property type="term" value="P:lipid A biosynthetic process"/>
    <property type="evidence" value="ECO:0007669"/>
    <property type="project" value="UniProtKB-UniRule"/>
</dbReference>
<dbReference type="GO" id="GO:0009252">
    <property type="term" value="P:peptidoglycan biosynthetic process"/>
    <property type="evidence" value="ECO:0007669"/>
    <property type="project" value="UniProtKB-UniRule"/>
</dbReference>
<dbReference type="GO" id="GO:0008360">
    <property type="term" value="P:regulation of cell shape"/>
    <property type="evidence" value="ECO:0007669"/>
    <property type="project" value="UniProtKB-KW"/>
</dbReference>
<dbReference type="GO" id="GO:0006048">
    <property type="term" value="P:UDP-N-acetylglucosamine biosynthetic process"/>
    <property type="evidence" value="ECO:0007669"/>
    <property type="project" value="UniProtKB-UniPathway"/>
</dbReference>
<dbReference type="CDD" id="cd02540">
    <property type="entry name" value="GT2_GlmU_N_bac"/>
    <property type="match status" value="1"/>
</dbReference>
<dbReference type="CDD" id="cd03353">
    <property type="entry name" value="LbH_GlmU_C"/>
    <property type="match status" value="1"/>
</dbReference>
<dbReference type="Gene3D" id="2.160.10.10">
    <property type="entry name" value="Hexapeptide repeat proteins"/>
    <property type="match status" value="1"/>
</dbReference>
<dbReference type="Gene3D" id="3.90.550.10">
    <property type="entry name" value="Spore Coat Polysaccharide Biosynthesis Protein SpsA, Chain A"/>
    <property type="match status" value="1"/>
</dbReference>
<dbReference type="HAMAP" id="MF_01631">
    <property type="entry name" value="GlmU"/>
    <property type="match status" value="1"/>
</dbReference>
<dbReference type="InterPro" id="IPR005882">
    <property type="entry name" value="Bifunctional_GlmU"/>
</dbReference>
<dbReference type="InterPro" id="IPR050065">
    <property type="entry name" value="GlmU-like"/>
</dbReference>
<dbReference type="InterPro" id="IPR038009">
    <property type="entry name" value="GlmU_C_LbH"/>
</dbReference>
<dbReference type="InterPro" id="IPR001451">
    <property type="entry name" value="Hexapep"/>
</dbReference>
<dbReference type="InterPro" id="IPR018357">
    <property type="entry name" value="Hexapep_transf_CS"/>
</dbReference>
<dbReference type="InterPro" id="IPR025877">
    <property type="entry name" value="MobA-like_NTP_Trfase"/>
</dbReference>
<dbReference type="InterPro" id="IPR029044">
    <property type="entry name" value="Nucleotide-diphossugar_trans"/>
</dbReference>
<dbReference type="InterPro" id="IPR011004">
    <property type="entry name" value="Trimer_LpxA-like_sf"/>
</dbReference>
<dbReference type="NCBIfam" id="TIGR01173">
    <property type="entry name" value="glmU"/>
    <property type="match status" value="1"/>
</dbReference>
<dbReference type="PANTHER" id="PTHR43584:SF3">
    <property type="entry name" value="BIFUNCTIONAL PROTEIN GLMU"/>
    <property type="match status" value="1"/>
</dbReference>
<dbReference type="PANTHER" id="PTHR43584">
    <property type="entry name" value="NUCLEOTIDYL TRANSFERASE"/>
    <property type="match status" value="1"/>
</dbReference>
<dbReference type="Pfam" id="PF00132">
    <property type="entry name" value="Hexapep"/>
    <property type="match status" value="2"/>
</dbReference>
<dbReference type="Pfam" id="PF12804">
    <property type="entry name" value="NTP_transf_3"/>
    <property type="match status" value="1"/>
</dbReference>
<dbReference type="SUPFAM" id="SSF53448">
    <property type="entry name" value="Nucleotide-diphospho-sugar transferases"/>
    <property type="match status" value="1"/>
</dbReference>
<dbReference type="SUPFAM" id="SSF51161">
    <property type="entry name" value="Trimeric LpxA-like enzymes"/>
    <property type="match status" value="1"/>
</dbReference>
<dbReference type="PROSITE" id="PS00101">
    <property type="entry name" value="HEXAPEP_TRANSFERASES"/>
    <property type="match status" value="2"/>
</dbReference>
<evidence type="ECO:0000255" key="1">
    <source>
        <dbReference type="HAMAP-Rule" id="MF_01631"/>
    </source>
</evidence>
<accession>B1YP62</accession>
<gene>
    <name evidence="1" type="primary">glmU</name>
    <name type="ordered locus">BamMC406_2891</name>
</gene>